<reference key="1">
    <citation type="journal article" date="2004" name="Nat. Biotechnol.">
        <title>The genome sequence of the anaerobic, sulfate-reducing bacterium Desulfovibrio vulgaris Hildenborough.</title>
        <authorList>
            <person name="Heidelberg J.F."/>
            <person name="Seshadri R."/>
            <person name="Haveman S.A."/>
            <person name="Hemme C.L."/>
            <person name="Paulsen I.T."/>
            <person name="Kolonay J.F."/>
            <person name="Eisen J.A."/>
            <person name="Ward N.L."/>
            <person name="Methe B.A."/>
            <person name="Brinkac L.M."/>
            <person name="Daugherty S.C."/>
            <person name="DeBoy R.T."/>
            <person name="Dodson R.J."/>
            <person name="Durkin A.S."/>
            <person name="Madupu R."/>
            <person name="Nelson W.C."/>
            <person name="Sullivan S.A."/>
            <person name="Fouts D.E."/>
            <person name="Haft D.H."/>
            <person name="Selengut J."/>
            <person name="Peterson J.D."/>
            <person name="Davidsen T.M."/>
            <person name="Zafar N."/>
            <person name="Zhou L."/>
            <person name="Radune D."/>
            <person name="Dimitrov G."/>
            <person name="Hance M."/>
            <person name="Tran K."/>
            <person name="Khouri H.M."/>
            <person name="Gill J."/>
            <person name="Utterback T.R."/>
            <person name="Feldblyum T.V."/>
            <person name="Wall J.D."/>
            <person name="Voordouw G."/>
            <person name="Fraser C.M."/>
        </authorList>
    </citation>
    <scope>NUCLEOTIDE SEQUENCE [LARGE SCALE GENOMIC DNA]</scope>
    <source>
        <strain>ATCC 29579 / DSM 644 / CCUG 34227 / NCIMB 8303 / VKM B-1760 / Hildenborough</strain>
    </source>
</reference>
<accession>Q727D8</accession>
<dbReference type="EC" id="3.5.1.108" evidence="1"/>
<dbReference type="EMBL" id="AE017285">
    <property type="protein sequence ID" value="AAS97389.1"/>
    <property type="molecule type" value="Genomic_DNA"/>
</dbReference>
<dbReference type="RefSeq" id="WP_010940177.1">
    <property type="nucleotide sequence ID" value="NC_002937.3"/>
</dbReference>
<dbReference type="RefSeq" id="YP_012129.1">
    <property type="nucleotide sequence ID" value="NC_002937.3"/>
</dbReference>
<dbReference type="SMR" id="Q727D8"/>
<dbReference type="STRING" id="882.DVU_2917"/>
<dbReference type="PaxDb" id="882-DVU_2917"/>
<dbReference type="EnsemblBacteria" id="AAS97389">
    <property type="protein sequence ID" value="AAS97389"/>
    <property type="gene ID" value="DVU_2917"/>
</dbReference>
<dbReference type="KEGG" id="dvu:DVU_2917"/>
<dbReference type="PATRIC" id="fig|882.5.peg.2638"/>
<dbReference type="eggNOG" id="COG0774">
    <property type="taxonomic scope" value="Bacteria"/>
</dbReference>
<dbReference type="HOGENOM" id="CLU_046528_1_0_7"/>
<dbReference type="OrthoDB" id="9802746at2"/>
<dbReference type="PhylomeDB" id="Q727D8"/>
<dbReference type="UniPathway" id="UPA00359">
    <property type="reaction ID" value="UER00478"/>
</dbReference>
<dbReference type="Proteomes" id="UP000002194">
    <property type="component" value="Chromosome"/>
</dbReference>
<dbReference type="GO" id="GO:0016020">
    <property type="term" value="C:membrane"/>
    <property type="evidence" value="ECO:0007669"/>
    <property type="project" value="GOC"/>
</dbReference>
<dbReference type="GO" id="GO:0046872">
    <property type="term" value="F:metal ion binding"/>
    <property type="evidence" value="ECO:0007669"/>
    <property type="project" value="UniProtKB-KW"/>
</dbReference>
<dbReference type="GO" id="GO:0103117">
    <property type="term" value="F:UDP-3-O-acyl-N-acetylglucosamine deacetylase activity"/>
    <property type="evidence" value="ECO:0007669"/>
    <property type="project" value="UniProtKB-UniRule"/>
</dbReference>
<dbReference type="GO" id="GO:0009245">
    <property type="term" value="P:lipid A biosynthetic process"/>
    <property type="evidence" value="ECO:0007669"/>
    <property type="project" value="UniProtKB-UniRule"/>
</dbReference>
<dbReference type="Gene3D" id="3.30.230.20">
    <property type="entry name" value="lpxc deacetylase, domain 1"/>
    <property type="match status" value="1"/>
</dbReference>
<dbReference type="Gene3D" id="3.30.1700.10">
    <property type="entry name" value="lpxc deacetylase, domain 2"/>
    <property type="match status" value="1"/>
</dbReference>
<dbReference type="HAMAP" id="MF_00388">
    <property type="entry name" value="LpxC"/>
    <property type="match status" value="1"/>
</dbReference>
<dbReference type="InterPro" id="IPR020568">
    <property type="entry name" value="Ribosomal_Su5_D2-typ_SF"/>
</dbReference>
<dbReference type="InterPro" id="IPR004463">
    <property type="entry name" value="UDP-acyl_GlcNac_deAcase"/>
</dbReference>
<dbReference type="InterPro" id="IPR011334">
    <property type="entry name" value="UDP-acyl_GlcNac_deAcase_C"/>
</dbReference>
<dbReference type="InterPro" id="IPR015870">
    <property type="entry name" value="UDP-acyl_N-AcGlcN_deAcase_N"/>
</dbReference>
<dbReference type="NCBIfam" id="TIGR00325">
    <property type="entry name" value="lpxC"/>
    <property type="match status" value="1"/>
</dbReference>
<dbReference type="PANTHER" id="PTHR33694">
    <property type="entry name" value="UDP-3-O-ACYL-N-ACETYLGLUCOSAMINE DEACETYLASE 1, MITOCHONDRIAL-RELATED"/>
    <property type="match status" value="1"/>
</dbReference>
<dbReference type="PANTHER" id="PTHR33694:SF1">
    <property type="entry name" value="UDP-3-O-ACYL-N-ACETYLGLUCOSAMINE DEACETYLASE 1, MITOCHONDRIAL-RELATED"/>
    <property type="match status" value="1"/>
</dbReference>
<dbReference type="Pfam" id="PF03331">
    <property type="entry name" value="LpxC"/>
    <property type="match status" value="1"/>
</dbReference>
<dbReference type="SUPFAM" id="SSF54211">
    <property type="entry name" value="Ribosomal protein S5 domain 2-like"/>
    <property type="match status" value="2"/>
</dbReference>
<comment type="function">
    <text evidence="1">Catalyzes the hydrolysis of UDP-3-O-myristoyl-N-acetylglucosamine to form UDP-3-O-myristoylglucosamine and acetate, the committed step in lipid A biosynthesis.</text>
</comment>
<comment type="catalytic activity">
    <reaction evidence="1">
        <text>a UDP-3-O-[(3R)-3-hydroxyacyl]-N-acetyl-alpha-D-glucosamine + H2O = a UDP-3-O-[(3R)-3-hydroxyacyl]-alpha-D-glucosamine + acetate</text>
        <dbReference type="Rhea" id="RHEA:67816"/>
        <dbReference type="ChEBI" id="CHEBI:15377"/>
        <dbReference type="ChEBI" id="CHEBI:30089"/>
        <dbReference type="ChEBI" id="CHEBI:137740"/>
        <dbReference type="ChEBI" id="CHEBI:173225"/>
        <dbReference type="EC" id="3.5.1.108"/>
    </reaction>
</comment>
<comment type="cofactor">
    <cofactor evidence="1">
        <name>Zn(2+)</name>
        <dbReference type="ChEBI" id="CHEBI:29105"/>
    </cofactor>
</comment>
<comment type="pathway">
    <text evidence="1">Glycolipid biosynthesis; lipid IV(A) biosynthesis; lipid IV(A) from (3R)-3-hydroxytetradecanoyl-[acyl-carrier-protein] and UDP-N-acetyl-alpha-D-glucosamine: step 2/6.</text>
</comment>
<comment type="similarity">
    <text evidence="1">Belongs to the LpxC family.</text>
</comment>
<evidence type="ECO:0000255" key="1">
    <source>
        <dbReference type="HAMAP-Rule" id="MF_00388"/>
    </source>
</evidence>
<gene>
    <name evidence="1" type="primary">lpxC</name>
    <name type="ordered locus">DVU_2917</name>
</gene>
<protein>
    <recommendedName>
        <fullName evidence="1">UDP-3-O-acyl-N-acetylglucosamine deacetylase</fullName>
        <shortName evidence="1">UDP-3-O-acyl-GlcNAc deacetylase</shortName>
        <ecNumber evidence="1">3.5.1.108</ecNumber>
    </recommendedName>
    <alternativeName>
        <fullName evidence="1">UDP-3-O-[R-3-hydroxymyristoyl]-N-acetylglucosamine deacetylase</fullName>
    </alternativeName>
</protein>
<keyword id="KW-0378">Hydrolase</keyword>
<keyword id="KW-0441">Lipid A biosynthesis</keyword>
<keyword id="KW-0444">Lipid biosynthesis</keyword>
<keyword id="KW-0443">Lipid metabolism</keyword>
<keyword id="KW-0479">Metal-binding</keyword>
<keyword id="KW-1185">Reference proteome</keyword>
<keyword id="KW-0862">Zinc</keyword>
<organism>
    <name type="scientific">Nitratidesulfovibrio vulgaris (strain ATCC 29579 / DSM 644 / CCUG 34227 / NCIMB 8303 / VKM B-1760 / Hildenborough)</name>
    <name type="common">Desulfovibrio vulgaris</name>
    <dbReference type="NCBI Taxonomy" id="882"/>
    <lineage>
        <taxon>Bacteria</taxon>
        <taxon>Pseudomonadati</taxon>
        <taxon>Thermodesulfobacteriota</taxon>
        <taxon>Desulfovibrionia</taxon>
        <taxon>Desulfovibrionales</taxon>
        <taxon>Desulfovibrionaceae</taxon>
        <taxon>Nitratidesulfovibrio</taxon>
    </lineage>
</organism>
<sequence length="308" mass="33380">MNQTTIKKSIACSGVGLHSGKTVRMVLHPAAEDTGIVFDIHTAQGVRRIAPEPQVVIATGLATTLGMDGASVATVEHLLAAIRGLEIDNITVEIEGGEVPIMDGSAASFVMLLRNAGIRRQTSARKVFRIARPVHYERDGKSIRALPYDGFRVEYRIEFPHPLIGRQTLSIDITPESFGEIAKARTFGFLREVEYLHSKGLALGGSLDNAIVLDDYSVLNPDGLRSPDEFVRHKVLDFVGDMAMMGVPLQGHFIVECSGHALNNGFLRMLEENASLYLEAVELPVAEQHPAALRPAARVATEGQPAIA</sequence>
<proteinExistence type="inferred from homology"/>
<name>LPXC_NITV2</name>
<feature type="chain" id="PRO_0000253664" description="UDP-3-O-acyl-N-acetylglucosamine deacetylase">
    <location>
        <begin position="1"/>
        <end position="308"/>
    </location>
</feature>
<feature type="active site" description="Proton donor" evidence="1">
    <location>
        <position position="260"/>
    </location>
</feature>
<feature type="binding site" evidence="1">
    <location>
        <position position="77"/>
    </location>
    <ligand>
        <name>Zn(2+)</name>
        <dbReference type="ChEBI" id="CHEBI:29105"/>
    </ligand>
</feature>
<feature type="binding site" evidence="1">
    <location>
        <position position="233"/>
    </location>
    <ligand>
        <name>Zn(2+)</name>
        <dbReference type="ChEBI" id="CHEBI:29105"/>
    </ligand>
</feature>
<feature type="binding site" evidence="1">
    <location>
        <position position="237"/>
    </location>
    <ligand>
        <name>Zn(2+)</name>
        <dbReference type="ChEBI" id="CHEBI:29105"/>
    </ligand>
</feature>